<sequence>MKVNPSVKPICDKCRVIRRHGRVMVICSDPRHKQRQG</sequence>
<gene>
    <name evidence="1" type="primary">rpmJ</name>
    <name type="ordered locus">MAV_4402</name>
</gene>
<feature type="chain" id="PRO_0000302241" description="Large ribosomal subunit protein bL36">
    <location>
        <begin position="1"/>
        <end position="37"/>
    </location>
</feature>
<reference key="1">
    <citation type="submission" date="2006-10" db="EMBL/GenBank/DDBJ databases">
        <authorList>
            <person name="Fleischmann R.D."/>
            <person name="Dodson R.J."/>
            <person name="Haft D.H."/>
            <person name="Merkel J.S."/>
            <person name="Nelson W.C."/>
            <person name="Fraser C.M."/>
        </authorList>
    </citation>
    <scope>NUCLEOTIDE SEQUENCE [LARGE SCALE GENOMIC DNA]</scope>
    <source>
        <strain>104</strain>
    </source>
</reference>
<accession>A0QKU9</accession>
<proteinExistence type="inferred from homology"/>
<name>RL36_MYCA1</name>
<evidence type="ECO:0000255" key="1">
    <source>
        <dbReference type="HAMAP-Rule" id="MF_00251"/>
    </source>
</evidence>
<evidence type="ECO:0000305" key="2"/>
<keyword id="KW-0687">Ribonucleoprotein</keyword>
<keyword id="KW-0689">Ribosomal protein</keyword>
<comment type="similarity">
    <text evidence="1">Belongs to the bacterial ribosomal protein bL36 family.</text>
</comment>
<organism>
    <name type="scientific">Mycobacterium avium (strain 104)</name>
    <dbReference type="NCBI Taxonomy" id="243243"/>
    <lineage>
        <taxon>Bacteria</taxon>
        <taxon>Bacillati</taxon>
        <taxon>Actinomycetota</taxon>
        <taxon>Actinomycetes</taxon>
        <taxon>Mycobacteriales</taxon>
        <taxon>Mycobacteriaceae</taxon>
        <taxon>Mycobacterium</taxon>
        <taxon>Mycobacterium avium complex (MAC)</taxon>
    </lineage>
</organism>
<dbReference type="EMBL" id="CP000479">
    <property type="protein sequence ID" value="ABK66379.1"/>
    <property type="molecule type" value="Genomic_DNA"/>
</dbReference>
<dbReference type="RefSeq" id="WP_003879483.1">
    <property type="nucleotide sequence ID" value="NC_008595.1"/>
</dbReference>
<dbReference type="SMR" id="A0QKU9"/>
<dbReference type="GeneID" id="98799388"/>
<dbReference type="KEGG" id="mav:MAV_4402"/>
<dbReference type="HOGENOM" id="CLU_135723_6_2_11"/>
<dbReference type="Proteomes" id="UP000001574">
    <property type="component" value="Chromosome"/>
</dbReference>
<dbReference type="GO" id="GO:0005737">
    <property type="term" value="C:cytoplasm"/>
    <property type="evidence" value="ECO:0007669"/>
    <property type="project" value="UniProtKB-ARBA"/>
</dbReference>
<dbReference type="GO" id="GO:1990904">
    <property type="term" value="C:ribonucleoprotein complex"/>
    <property type="evidence" value="ECO:0007669"/>
    <property type="project" value="UniProtKB-KW"/>
</dbReference>
<dbReference type="GO" id="GO:0005840">
    <property type="term" value="C:ribosome"/>
    <property type="evidence" value="ECO:0007669"/>
    <property type="project" value="UniProtKB-KW"/>
</dbReference>
<dbReference type="GO" id="GO:0003735">
    <property type="term" value="F:structural constituent of ribosome"/>
    <property type="evidence" value="ECO:0007669"/>
    <property type="project" value="InterPro"/>
</dbReference>
<dbReference type="GO" id="GO:0006412">
    <property type="term" value="P:translation"/>
    <property type="evidence" value="ECO:0007669"/>
    <property type="project" value="UniProtKB-UniRule"/>
</dbReference>
<dbReference type="HAMAP" id="MF_00251">
    <property type="entry name" value="Ribosomal_bL36"/>
    <property type="match status" value="1"/>
</dbReference>
<dbReference type="InterPro" id="IPR000473">
    <property type="entry name" value="Ribosomal_bL36"/>
</dbReference>
<dbReference type="InterPro" id="IPR035977">
    <property type="entry name" value="Ribosomal_bL36_sp"/>
</dbReference>
<dbReference type="NCBIfam" id="TIGR01022">
    <property type="entry name" value="rpmJ_bact"/>
    <property type="match status" value="1"/>
</dbReference>
<dbReference type="PANTHER" id="PTHR42888">
    <property type="entry name" value="50S RIBOSOMAL PROTEIN L36, CHLOROPLASTIC"/>
    <property type="match status" value="1"/>
</dbReference>
<dbReference type="PANTHER" id="PTHR42888:SF1">
    <property type="entry name" value="LARGE RIBOSOMAL SUBUNIT PROTEIN BL36C"/>
    <property type="match status" value="1"/>
</dbReference>
<dbReference type="Pfam" id="PF00444">
    <property type="entry name" value="Ribosomal_L36"/>
    <property type="match status" value="1"/>
</dbReference>
<dbReference type="SUPFAM" id="SSF57840">
    <property type="entry name" value="Ribosomal protein L36"/>
    <property type="match status" value="1"/>
</dbReference>
<dbReference type="PROSITE" id="PS00828">
    <property type="entry name" value="RIBOSOMAL_L36"/>
    <property type="match status" value="1"/>
</dbReference>
<protein>
    <recommendedName>
        <fullName evidence="1">Large ribosomal subunit protein bL36</fullName>
    </recommendedName>
    <alternativeName>
        <fullName evidence="2">50S ribosomal protein L36</fullName>
    </alternativeName>
</protein>